<gene>
    <name evidence="1" type="primary">yfbR</name>
    <name type="ordered locus">Ecok1_21860</name>
    <name type="ORF">APECO1_4273</name>
</gene>
<reference key="1">
    <citation type="journal article" date="2007" name="J. Bacteriol.">
        <title>The genome sequence of avian pathogenic Escherichia coli strain O1:K1:H7 shares strong similarities with human extraintestinal pathogenic E. coli genomes.</title>
        <authorList>
            <person name="Johnson T.J."/>
            <person name="Kariyawasam S."/>
            <person name="Wannemuehler Y."/>
            <person name="Mangiamele P."/>
            <person name="Johnson S.J."/>
            <person name="Doetkott C."/>
            <person name="Skyberg J.A."/>
            <person name="Lynne A.M."/>
            <person name="Johnson J.R."/>
            <person name="Nolan L.K."/>
        </authorList>
    </citation>
    <scope>NUCLEOTIDE SEQUENCE [LARGE SCALE GENOMIC DNA]</scope>
</reference>
<organism>
    <name type="scientific">Escherichia coli O1:K1 / APEC</name>
    <dbReference type="NCBI Taxonomy" id="405955"/>
    <lineage>
        <taxon>Bacteria</taxon>
        <taxon>Pseudomonadati</taxon>
        <taxon>Pseudomonadota</taxon>
        <taxon>Gammaproteobacteria</taxon>
        <taxon>Enterobacterales</taxon>
        <taxon>Enterobacteriaceae</taxon>
        <taxon>Escherichia</taxon>
    </lineage>
</organism>
<feature type="chain" id="PRO_1000064950" description="5'-deoxynucleotidase YfbR">
    <location>
        <begin position="1"/>
        <end position="199"/>
    </location>
</feature>
<feature type="domain" description="HD" evidence="2">
    <location>
        <begin position="30"/>
        <end position="142"/>
    </location>
</feature>
<feature type="binding site" evidence="1">
    <location>
        <begin position="18"/>
        <end position="19"/>
    </location>
    <ligand>
        <name>substrate</name>
    </ligand>
</feature>
<feature type="binding site" evidence="1">
    <location>
        <position position="33"/>
    </location>
    <ligand>
        <name>a divalent metal cation</name>
        <dbReference type="ChEBI" id="CHEBI:60240"/>
    </ligand>
</feature>
<feature type="binding site" evidence="1">
    <location>
        <position position="33"/>
    </location>
    <ligand>
        <name>substrate</name>
    </ligand>
</feature>
<feature type="binding site" evidence="1">
    <location>
        <position position="68"/>
    </location>
    <ligand>
        <name>a divalent metal cation</name>
        <dbReference type="ChEBI" id="CHEBI:60240"/>
    </ligand>
</feature>
<feature type="binding site" evidence="1">
    <location>
        <position position="69"/>
    </location>
    <ligand>
        <name>a divalent metal cation</name>
        <dbReference type="ChEBI" id="CHEBI:60240"/>
    </ligand>
</feature>
<feature type="binding site" evidence="1">
    <location>
        <position position="69"/>
    </location>
    <ligand>
        <name>substrate</name>
    </ligand>
</feature>
<feature type="binding site" evidence="1">
    <location>
        <begin position="77"/>
        <end position="80"/>
    </location>
    <ligand>
        <name>substrate</name>
    </ligand>
</feature>
<feature type="binding site" evidence="1">
    <location>
        <position position="137"/>
    </location>
    <ligand>
        <name>a divalent metal cation</name>
        <dbReference type="ChEBI" id="CHEBI:60240"/>
    </ligand>
</feature>
<feature type="binding site" evidence="1">
    <location>
        <position position="137"/>
    </location>
    <ligand>
        <name>substrate</name>
    </ligand>
</feature>
<feature type="site" description="Appears to be important in orienting the phosphate for catalysis" evidence="1">
    <location>
        <position position="18"/>
    </location>
</feature>
<dbReference type="EC" id="3.1.3.89" evidence="1"/>
<dbReference type="EMBL" id="CP000468">
    <property type="protein sequence ID" value="ABJ01680.1"/>
    <property type="molecule type" value="Genomic_DNA"/>
</dbReference>
<dbReference type="RefSeq" id="WP_000813854.1">
    <property type="nucleotide sequence ID" value="NZ_CADILS010000025.1"/>
</dbReference>
<dbReference type="SMR" id="A1ADE0"/>
<dbReference type="KEGG" id="ecv:APECO1_4273"/>
<dbReference type="HOGENOM" id="CLU_084784_0_0_6"/>
<dbReference type="Proteomes" id="UP000008216">
    <property type="component" value="Chromosome"/>
</dbReference>
<dbReference type="GO" id="GO:0005737">
    <property type="term" value="C:cytoplasm"/>
    <property type="evidence" value="ECO:0007669"/>
    <property type="project" value="UniProtKB-SubCell"/>
</dbReference>
<dbReference type="GO" id="GO:0002953">
    <property type="term" value="F:5'-deoxynucleotidase activity"/>
    <property type="evidence" value="ECO:0007669"/>
    <property type="project" value="UniProtKB-EC"/>
</dbReference>
<dbReference type="GO" id="GO:0046872">
    <property type="term" value="F:metal ion binding"/>
    <property type="evidence" value="ECO:0007669"/>
    <property type="project" value="UniProtKB-KW"/>
</dbReference>
<dbReference type="GO" id="GO:0000166">
    <property type="term" value="F:nucleotide binding"/>
    <property type="evidence" value="ECO:0007669"/>
    <property type="project" value="UniProtKB-KW"/>
</dbReference>
<dbReference type="CDD" id="cd00077">
    <property type="entry name" value="HDc"/>
    <property type="match status" value="1"/>
</dbReference>
<dbReference type="FunFam" id="1.10.3210.10:FF:000002">
    <property type="entry name" value="Nucleotidase YfbR"/>
    <property type="match status" value="1"/>
</dbReference>
<dbReference type="Gene3D" id="1.10.3210.10">
    <property type="entry name" value="Hypothetical protein af1432"/>
    <property type="match status" value="1"/>
</dbReference>
<dbReference type="HAMAP" id="MF_01100">
    <property type="entry name" value="5DNU"/>
    <property type="match status" value="1"/>
</dbReference>
<dbReference type="InterPro" id="IPR003607">
    <property type="entry name" value="HD/PDEase_dom"/>
</dbReference>
<dbReference type="InterPro" id="IPR006674">
    <property type="entry name" value="HD_domain"/>
</dbReference>
<dbReference type="InterPro" id="IPR022971">
    <property type="entry name" value="YfbR"/>
</dbReference>
<dbReference type="InterPro" id="IPR039356">
    <property type="entry name" value="YfbR/HDDC2"/>
</dbReference>
<dbReference type="NCBIfam" id="NF003009">
    <property type="entry name" value="PRK03826.1"/>
    <property type="match status" value="1"/>
</dbReference>
<dbReference type="PANTHER" id="PTHR11845">
    <property type="entry name" value="5'-DEOXYNUCLEOTIDASE HDDC2"/>
    <property type="match status" value="1"/>
</dbReference>
<dbReference type="PANTHER" id="PTHR11845:SF13">
    <property type="entry name" value="5'-DEOXYNUCLEOTIDASE HDDC2"/>
    <property type="match status" value="1"/>
</dbReference>
<dbReference type="Pfam" id="PF12917">
    <property type="entry name" value="YfbR-like"/>
    <property type="match status" value="1"/>
</dbReference>
<dbReference type="SMART" id="SM00471">
    <property type="entry name" value="HDc"/>
    <property type="match status" value="1"/>
</dbReference>
<dbReference type="SUPFAM" id="SSF109604">
    <property type="entry name" value="HD-domain/PDEase-like"/>
    <property type="match status" value="1"/>
</dbReference>
<dbReference type="PROSITE" id="PS51831">
    <property type="entry name" value="HD"/>
    <property type="match status" value="1"/>
</dbReference>
<accession>A1ADE0</accession>
<comment type="function">
    <text evidence="1">Catalyzes the strictly specific dephosphorylation of 2'-deoxyribonucleoside 5'-monophosphates.</text>
</comment>
<comment type="catalytic activity">
    <reaction evidence="1">
        <text>a 2'-deoxyribonucleoside 5'-phosphate + H2O = a 2'-deoxyribonucleoside + phosphate</text>
        <dbReference type="Rhea" id="RHEA:36167"/>
        <dbReference type="ChEBI" id="CHEBI:15377"/>
        <dbReference type="ChEBI" id="CHEBI:18274"/>
        <dbReference type="ChEBI" id="CHEBI:43474"/>
        <dbReference type="ChEBI" id="CHEBI:65317"/>
        <dbReference type="EC" id="3.1.3.89"/>
    </reaction>
</comment>
<comment type="cofactor">
    <cofactor evidence="1">
        <name>a divalent metal cation</name>
        <dbReference type="ChEBI" id="CHEBI:60240"/>
    </cofactor>
</comment>
<comment type="subunit">
    <text evidence="1">Homodimer.</text>
</comment>
<comment type="subcellular location">
    <subcellularLocation>
        <location evidence="1">Cytoplasm</location>
    </subcellularLocation>
</comment>
<comment type="similarity">
    <text evidence="1">Belongs to the 5DNU family.</text>
</comment>
<evidence type="ECO:0000255" key="1">
    <source>
        <dbReference type="HAMAP-Rule" id="MF_01100"/>
    </source>
</evidence>
<evidence type="ECO:0000255" key="2">
    <source>
        <dbReference type="PROSITE-ProRule" id="PRU01175"/>
    </source>
</evidence>
<protein>
    <recommendedName>
        <fullName evidence="1">5'-deoxynucleotidase YfbR</fullName>
        <ecNumber evidence="1">3.1.3.89</ecNumber>
    </recommendedName>
    <alternativeName>
        <fullName evidence="1">5'-deoxyribonucleotidase</fullName>
    </alternativeName>
    <alternativeName>
        <fullName evidence="1">Nucleoside 5'-monophosphate phosphohydrolase</fullName>
    </alternativeName>
</protein>
<keyword id="KW-0963">Cytoplasm</keyword>
<keyword id="KW-0378">Hydrolase</keyword>
<keyword id="KW-0479">Metal-binding</keyword>
<keyword id="KW-0547">Nucleotide-binding</keyword>
<keyword id="KW-1185">Reference proteome</keyword>
<proteinExistence type="inferred from homology"/>
<sequence>MKQSHFFAHLSRLKLINRWPLMRNVRTENVSEHSLQVAMVAHALAAIKNRKFGGNVNAERIALLAMYHDASEVLTGDLPTPVKYFNSQIAQEYKAIEKIAQQKLVDMVPEELQDIFAPLIDEHAYSDEEKSLVKQADALCAYLKCLEELAAGNNEFLLAKTRLEATLEARRSQEMDYFMEVFVPSFHLSLDEISQDSPL</sequence>
<name>5DNU_ECOK1</name>